<evidence type="ECO:0000250" key="1"/>
<evidence type="ECO:0000255" key="2">
    <source>
        <dbReference type="PROSITE-ProRule" id="PRU00161"/>
    </source>
</evidence>
<evidence type="ECO:0000305" key="3"/>
<organism>
    <name type="scientific">Xenopus tropicalis</name>
    <name type="common">Western clawed frog</name>
    <name type="synonym">Silurana tropicalis</name>
    <dbReference type="NCBI Taxonomy" id="8364"/>
    <lineage>
        <taxon>Eukaryota</taxon>
        <taxon>Metazoa</taxon>
        <taxon>Chordata</taxon>
        <taxon>Craniata</taxon>
        <taxon>Vertebrata</taxon>
        <taxon>Euteleostomi</taxon>
        <taxon>Amphibia</taxon>
        <taxon>Batrachia</taxon>
        <taxon>Anura</taxon>
        <taxon>Pipoidea</taxon>
        <taxon>Pipidae</taxon>
        <taxon>Xenopodinae</taxon>
        <taxon>Xenopus</taxon>
        <taxon>Silurana</taxon>
    </lineage>
</organism>
<name>NIP7_XENTR</name>
<comment type="function">
    <text evidence="1">Required for proper 34S pre-rRNA processing and 60S ribosome subunit assembly.</text>
</comment>
<comment type="subunit">
    <text evidence="1">Monomer. Interacts with pre-ribosome complex. May bind to RNA. Interacts with NOL8. Interacts with FTSJ3 (By similarity).</text>
</comment>
<comment type="subcellular location">
    <subcellularLocation>
        <location evidence="1">Nucleus</location>
        <location evidence="1">Nucleolus</location>
    </subcellularLocation>
</comment>
<comment type="similarity">
    <text evidence="3">Belongs to the NIP7 family.</text>
</comment>
<feature type="chain" id="PRO_0000355570" description="60S ribosome subunit biogenesis protein NIP7 homolog">
    <location>
        <begin position="1"/>
        <end position="180"/>
    </location>
</feature>
<feature type="domain" description="PUA" evidence="2">
    <location>
        <begin position="94"/>
        <end position="170"/>
    </location>
</feature>
<feature type="region of interest" description="N-terminal domain" evidence="1">
    <location>
        <begin position="1"/>
        <end position="92"/>
    </location>
</feature>
<feature type="region of interest" description="C-terminal domain" evidence="1">
    <location>
        <begin position="93"/>
        <end position="180"/>
    </location>
</feature>
<proteinExistence type="evidence at transcript level"/>
<gene>
    <name type="primary">nip7</name>
</gene>
<keyword id="KW-0539">Nucleus</keyword>
<keyword id="KW-1185">Reference proteome</keyword>
<keyword id="KW-0690">Ribosome biogenesis</keyword>
<keyword id="KW-0694">RNA-binding</keyword>
<sequence>MRPLTDEETKAMFEKLSKYIGENIKLLVDRPDGTYCFRLHNDRVYYVSERILKLATNIARDKLVSLGTCFGKFTKTHKFRLHVTALDYLAPYAKYKVWVKPGAEQSFLYGNHVLKSGLGRITENTSQYQGVVVYSMADIPLGFGVAAKSTQECRKLDPMAIVVFHQADVGEYIRHEDTLT</sequence>
<protein>
    <recommendedName>
        <fullName>60S ribosome subunit biogenesis protein NIP7 homolog</fullName>
    </recommendedName>
</protein>
<dbReference type="EMBL" id="BC135468">
    <property type="protein sequence ID" value="AAI35469.1"/>
    <property type="molecule type" value="mRNA"/>
</dbReference>
<dbReference type="RefSeq" id="NP_001096512.1">
    <property type="nucleotide sequence ID" value="NM_001103042.1"/>
</dbReference>
<dbReference type="SMR" id="A4QND5"/>
<dbReference type="FunCoup" id="A4QND5">
    <property type="interactions" value="2486"/>
</dbReference>
<dbReference type="STRING" id="8364.ENSXETP00000020685"/>
<dbReference type="PaxDb" id="8364-ENSXETP00000038700"/>
<dbReference type="DNASU" id="100125143"/>
<dbReference type="GeneID" id="100125143"/>
<dbReference type="KEGG" id="xtr:100125143"/>
<dbReference type="AGR" id="Xenbase:XB-GENE-1005412"/>
<dbReference type="CTD" id="51388"/>
<dbReference type="Xenbase" id="XB-GENE-1005412">
    <property type="gene designation" value="nip7"/>
</dbReference>
<dbReference type="eggNOG" id="KOG3492">
    <property type="taxonomic scope" value="Eukaryota"/>
</dbReference>
<dbReference type="HOGENOM" id="CLU_097217_0_0_1"/>
<dbReference type="InParanoid" id="A4QND5"/>
<dbReference type="OMA" id="LISMGTC"/>
<dbReference type="OrthoDB" id="27490at2759"/>
<dbReference type="PhylomeDB" id="A4QND5"/>
<dbReference type="TreeFam" id="TF300081"/>
<dbReference type="Proteomes" id="UP000008143">
    <property type="component" value="Chromosome 4"/>
</dbReference>
<dbReference type="GO" id="GO:0005730">
    <property type="term" value="C:nucleolus"/>
    <property type="evidence" value="ECO:0007669"/>
    <property type="project" value="UniProtKB-SubCell"/>
</dbReference>
<dbReference type="GO" id="GO:0003723">
    <property type="term" value="F:RNA binding"/>
    <property type="evidence" value="ECO:0007669"/>
    <property type="project" value="UniProtKB-KW"/>
</dbReference>
<dbReference type="GO" id="GO:0042255">
    <property type="term" value="P:ribosome assembly"/>
    <property type="evidence" value="ECO:0007669"/>
    <property type="project" value="InterPro"/>
</dbReference>
<dbReference type="CDD" id="cd21146">
    <property type="entry name" value="Nip7_N_euk"/>
    <property type="match status" value="1"/>
</dbReference>
<dbReference type="CDD" id="cd21151">
    <property type="entry name" value="PUA_Nip7-like"/>
    <property type="match status" value="1"/>
</dbReference>
<dbReference type="FunFam" id="2.30.130.10:FF:000002">
    <property type="entry name" value="60S ribosome subunit biogenesis protein NIP7 homolog"/>
    <property type="match status" value="1"/>
</dbReference>
<dbReference type="FunFam" id="3.10.450.220:FF:000001">
    <property type="entry name" value="60S ribosome subunit biogenesis protein NIP7 homolog"/>
    <property type="match status" value="1"/>
</dbReference>
<dbReference type="Gene3D" id="3.10.450.220">
    <property type="match status" value="1"/>
</dbReference>
<dbReference type="Gene3D" id="2.30.130.10">
    <property type="entry name" value="PUA domain"/>
    <property type="match status" value="1"/>
</dbReference>
<dbReference type="InterPro" id="IPR040598">
    <property type="entry name" value="NIP7_N"/>
</dbReference>
<dbReference type="InterPro" id="IPR055359">
    <property type="entry name" value="Nip7_N_euk"/>
</dbReference>
<dbReference type="InterPro" id="IPR002478">
    <property type="entry name" value="PUA"/>
</dbReference>
<dbReference type="InterPro" id="IPR015947">
    <property type="entry name" value="PUA-like_sf"/>
</dbReference>
<dbReference type="InterPro" id="IPR036974">
    <property type="entry name" value="PUA_sf"/>
</dbReference>
<dbReference type="InterPro" id="IPR016686">
    <property type="entry name" value="Ribosomal_synth_fac_NIP7"/>
</dbReference>
<dbReference type="InterPro" id="IPR005155">
    <property type="entry name" value="UPF0113_PUA"/>
</dbReference>
<dbReference type="PANTHER" id="PTHR23415">
    <property type="entry name" value="CYCLIN-DEPENDENT KINASES REGULATORY SUBUNIT/60S RIBOSOME SUBUNIT BIOGENESIS PROTEIN NIP7"/>
    <property type="match status" value="1"/>
</dbReference>
<dbReference type="Pfam" id="PF17833">
    <property type="entry name" value="pre-PUA_NIP7"/>
    <property type="match status" value="1"/>
</dbReference>
<dbReference type="Pfam" id="PF03657">
    <property type="entry name" value="UPF0113"/>
    <property type="match status" value="1"/>
</dbReference>
<dbReference type="PIRSF" id="PIRSF017190">
    <property type="entry name" value="Rbsml_synth_fac_NIP7"/>
    <property type="match status" value="1"/>
</dbReference>
<dbReference type="SMART" id="SM00359">
    <property type="entry name" value="PUA"/>
    <property type="match status" value="1"/>
</dbReference>
<dbReference type="SUPFAM" id="SSF88802">
    <property type="entry name" value="Pre-PUA domain"/>
    <property type="match status" value="1"/>
</dbReference>
<dbReference type="SUPFAM" id="SSF88697">
    <property type="entry name" value="PUA domain-like"/>
    <property type="match status" value="1"/>
</dbReference>
<dbReference type="PROSITE" id="PS50890">
    <property type="entry name" value="PUA"/>
    <property type="match status" value="1"/>
</dbReference>
<accession>A4QND5</accession>
<reference key="1">
    <citation type="submission" date="2007-03" db="EMBL/GenBank/DDBJ databases">
        <authorList>
            <consortium name="NIH - Xenopus Gene Collection (XGC) project"/>
        </authorList>
    </citation>
    <scope>NUCLEOTIDE SEQUENCE [LARGE SCALE MRNA]</scope>
</reference>